<proteinExistence type="evidence at protein level"/>
<accession>Q9R087</accession>
<feature type="signal peptide" evidence="2">
    <location>
        <begin position="1"/>
        <end position="23"/>
    </location>
</feature>
<feature type="chain" id="PRO_0000012325" description="Glypican-6">
    <location>
        <begin position="24"/>
        <end position="530"/>
    </location>
</feature>
<feature type="chain" id="PRO_0000333852" description="Secreted glypican-6">
    <location>
        <begin position="24"/>
        <end status="unknown"/>
    </location>
</feature>
<feature type="propeptide" id="PRO_0000012326" description="Removed in mature form" evidence="2">
    <location>
        <begin position="531"/>
        <end position="555"/>
    </location>
</feature>
<feature type="region of interest" description="Disordered" evidence="3">
    <location>
        <begin position="348"/>
        <end position="376"/>
    </location>
</feature>
<feature type="region of interest" description="Disordered" evidence="3">
    <location>
        <begin position="480"/>
        <end position="501"/>
    </location>
</feature>
<feature type="compositionally biased region" description="Low complexity" evidence="3">
    <location>
        <begin position="348"/>
        <end position="357"/>
    </location>
</feature>
<feature type="lipid moiety-binding region" description="GPI-anchor amidated serine" evidence="2">
    <location>
        <position position="530"/>
    </location>
</feature>
<dbReference type="EMBL" id="AF105268">
    <property type="protein sequence ID" value="AAD55750.1"/>
    <property type="molecule type" value="mRNA"/>
</dbReference>
<dbReference type="CCDS" id="CCDS27330.1"/>
<dbReference type="RefSeq" id="NP_035951.1">
    <property type="nucleotide sequence ID" value="NM_011821.3"/>
</dbReference>
<dbReference type="SMR" id="Q9R087"/>
<dbReference type="BioGRID" id="204778">
    <property type="interactions" value="1"/>
</dbReference>
<dbReference type="FunCoup" id="Q9R087">
    <property type="interactions" value="852"/>
</dbReference>
<dbReference type="STRING" id="10090.ENSMUSP00000120362"/>
<dbReference type="GlyGen" id="Q9R087">
    <property type="glycosylation" value="1 site"/>
</dbReference>
<dbReference type="PhosphoSitePlus" id="Q9R087"/>
<dbReference type="PaxDb" id="10090-ENSMUSP00000120362"/>
<dbReference type="ProteomicsDB" id="271036"/>
<dbReference type="Pumba" id="Q9R087"/>
<dbReference type="Antibodypedia" id="2876">
    <property type="antibodies" value="204 antibodies from 24 providers"/>
</dbReference>
<dbReference type="DNASU" id="23888"/>
<dbReference type="Ensembl" id="ENSMUST00000078849.12">
    <property type="protein sequence ID" value="ENSMUSP00000077893.5"/>
    <property type="gene ID" value="ENSMUSG00000058571.12"/>
</dbReference>
<dbReference type="Ensembl" id="ENSMUST00000088483.10">
    <property type="protein sequence ID" value="ENSMUSP00000085835.4"/>
    <property type="gene ID" value="ENSMUSG00000058571.12"/>
</dbReference>
<dbReference type="GeneID" id="23888"/>
<dbReference type="KEGG" id="mmu:23888"/>
<dbReference type="UCSC" id="uc007uyl.2">
    <property type="organism name" value="mouse"/>
</dbReference>
<dbReference type="AGR" id="MGI:1346322"/>
<dbReference type="CTD" id="10082"/>
<dbReference type="MGI" id="MGI:1346322">
    <property type="gene designation" value="Gpc6"/>
</dbReference>
<dbReference type="VEuPathDB" id="HostDB:ENSMUSG00000058571"/>
<dbReference type="eggNOG" id="KOG3821">
    <property type="taxonomic scope" value="Eukaryota"/>
</dbReference>
<dbReference type="GeneTree" id="ENSGT01050000244897"/>
<dbReference type="InParanoid" id="Q9R087"/>
<dbReference type="OrthoDB" id="10010764at2759"/>
<dbReference type="PhylomeDB" id="Q9R087"/>
<dbReference type="Reactome" id="R-MMU-1971475">
    <property type="pathway name" value="A tetrasaccharide linker sequence is required for GAG synthesis"/>
</dbReference>
<dbReference type="Reactome" id="R-MMU-2022928">
    <property type="pathway name" value="HS-GAG biosynthesis"/>
</dbReference>
<dbReference type="Reactome" id="R-MMU-2024096">
    <property type="pathway name" value="HS-GAG degradation"/>
</dbReference>
<dbReference type="Reactome" id="R-MMU-975634">
    <property type="pathway name" value="Retinoid metabolism and transport"/>
</dbReference>
<dbReference type="BioGRID-ORCS" id="23888">
    <property type="hits" value="3 hits in 77 CRISPR screens"/>
</dbReference>
<dbReference type="ChiTaRS" id="Gpc6">
    <property type="organism name" value="mouse"/>
</dbReference>
<dbReference type="PRO" id="PR:Q9R087"/>
<dbReference type="Proteomes" id="UP000000589">
    <property type="component" value="Chromosome 14"/>
</dbReference>
<dbReference type="RNAct" id="Q9R087">
    <property type="molecule type" value="protein"/>
</dbReference>
<dbReference type="Bgee" id="ENSMUSG00000058571">
    <property type="expression patterns" value="Expressed in ascending aorta and 205 other cell types or tissues"/>
</dbReference>
<dbReference type="ExpressionAtlas" id="Q9R087">
    <property type="expression patterns" value="baseline and differential"/>
</dbReference>
<dbReference type="GO" id="GO:0005576">
    <property type="term" value="C:extracellular region"/>
    <property type="evidence" value="ECO:0007669"/>
    <property type="project" value="UniProtKB-SubCell"/>
</dbReference>
<dbReference type="GO" id="GO:0005796">
    <property type="term" value="C:Golgi lumen"/>
    <property type="evidence" value="ECO:0000304"/>
    <property type="project" value="Reactome"/>
</dbReference>
<dbReference type="GO" id="GO:0005886">
    <property type="term" value="C:plasma membrane"/>
    <property type="evidence" value="ECO:0000250"/>
    <property type="project" value="MGI"/>
</dbReference>
<dbReference type="GO" id="GO:0098552">
    <property type="term" value="C:side of membrane"/>
    <property type="evidence" value="ECO:0007669"/>
    <property type="project" value="UniProtKB-KW"/>
</dbReference>
<dbReference type="GO" id="GO:0045202">
    <property type="term" value="C:synapse"/>
    <property type="evidence" value="ECO:0000314"/>
    <property type="project" value="SynGO"/>
</dbReference>
<dbReference type="GO" id="GO:0016477">
    <property type="term" value="P:cell migration"/>
    <property type="evidence" value="ECO:0000250"/>
    <property type="project" value="UniProtKB"/>
</dbReference>
<dbReference type="GO" id="GO:0009966">
    <property type="term" value="P:regulation of signal transduction"/>
    <property type="evidence" value="ECO:0007669"/>
    <property type="project" value="InterPro"/>
</dbReference>
<dbReference type="InterPro" id="IPR001863">
    <property type="entry name" value="Glypican"/>
</dbReference>
<dbReference type="InterPro" id="IPR019803">
    <property type="entry name" value="Glypican_CS"/>
</dbReference>
<dbReference type="PANTHER" id="PTHR10822">
    <property type="entry name" value="GLYPICAN"/>
    <property type="match status" value="1"/>
</dbReference>
<dbReference type="PANTHER" id="PTHR10822:SF31">
    <property type="entry name" value="GLYPICAN-6"/>
    <property type="match status" value="1"/>
</dbReference>
<dbReference type="Pfam" id="PF01153">
    <property type="entry name" value="Glypican"/>
    <property type="match status" value="1"/>
</dbReference>
<dbReference type="PROSITE" id="PS01207">
    <property type="entry name" value="GLYPICAN"/>
    <property type="match status" value="1"/>
</dbReference>
<reference key="1">
    <citation type="journal article" date="1999" name="J. Biol. Chem.">
        <title>Glypican-6, a new member of the glypican family of cell surface heparan sulfate proteoglycans.</title>
        <authorList>
            <person name="Veugelers M."/>
            <person name="De Cat B."/>
            <person name="Ceulemans H."/>
            <person name="Bruystens A.-M."/>
            <person name="Coomans C."/>
            <person name="Duerr J."/>
            <person name="Vermeesch J."/>
            <person name="Marynen P."/>
            <person name="David G."/>
        </authorList>
    </citation>
    <scope>NUCLEOTIDE SEQUENCE [MRNA]</scope>
    <scope>DEVELOPMENTAL STAGE</scope>
    <source>
        <strain>Swiss Webster / NIH</strain>
        <tissue>Embryo</tissue>
    </source>
</reference>
<reference key="2">
    <citation type="journal article" date="2006" name="Mol. Cell. Proteomics">
        <title>Comprehensive identification of phosphorylation sites in postsynaptic density preparations.</title>
        <authorList>
            <person name="Trinidad J.C."/>
            <person name="Specht C.G."/>
            <person name="Thalhammer A."/>
            <person name="Schoepfer R."/>
            <person name="Burlingame A.L."/>
        </authorList>
    </citation>
    <scope>IDENTIFICATION BY MASS SPECTROMETRY [LARGE SCALE ANALYSIS]</scope>
    <source>
        <tissue>Brain</tissue>
    </source>
</reference>
<reference key="3">
    <citation type="journal article" date="2009" name="Am. J. Hum. Genet.">
        <title>Mutations in the heparan-sulfate proteoglycan glypican 6 (GPC6) impair endochondral ossification and cause recessive omodysplasia.</title>
        <authorList>
            <person name="Campos-Xavier A.B."/>
            <person name="Martinet D."/>
            <person name="Bateman J."/>
            <person name="Belluoccio D."/>
            <person name="Rowley L."/>
            <person name="Tan T.Y."/>
            <person name="Baxova A."/>
            <person name="Gustavson K.H."/>
            <person name="Borochowitz Z.U."/>
            <person name="Innes A.M."/>
            <person name="Unger S."/>
            <person name="Beckmann J.S."/>
            <person name="Mittaz L."/>
            <person name="Ballhausen D."/>
            <person name="Superti-Furga A."/>
            <person name="Savarirayan R."/>
            <person name="Bonafe L."/>
        </authorList>
    </citation>
    <scope>TISSUE SPECIFICITY</scope>
</reference>
<evidence type="ECO:0000250" key="1"/>
<evidence type="ECO:0000255" key="2"/>
<evidence type="ECO:0000256" key="3">
    <source>
        <dbReference type="SAM" id="MobiDB-lite"/>
    </source>
</evidence>
<evidence type="ECO:0000269" key="4">
    <source>
    </source>
</evidence>
<evidence type="ECO:0000269" key="5">
    <source>
    </source>
</evidence>
<evidence type="ECO:0000305" key="6"/>
<name>GPC6_MOUSE</name>
<protein>
    <recommendedName>
        <fullName>Glypican-6</fullName>
    </recommendedName>
    <component>
        <recommendedName>
            <fullName>Secreted glypican-6</fullName>
        </recommendedName>
    </component>
</protein>
<sequence length="555" mass="63057">MPSWIRAVILPLSGLLLTLPAAADVKARSCSEVRQAYGAKGFSLADIPYQEIAGEHLRICPQEYTCCTTEMEDKLSQQSKLEFENLVEETSHFVRTTFVSRHKKFDEFFRELLENAEKSLNDMFVRTYGMLYMQNSEVFQDLFTELKRYYTGGNVNLEEMLNDFWARLLERMFQLINPQYHFSEDYLECVSKYTDQLKPFGDVPRKLKIQVTRAFIAARTFVQGLTVGREVANRVSKVSPTPGCIRALMKMLYCPYCRGLPTVRPCNNYCLNVMKGCLANQADLDTEWNLFIDAMLLVAERLEGPFNIESVMDPIDVKISEAIMNMQENSMQVSAKVFQGCGQPKPAPALRSARSAPENFNTRFRPYNPEERPTTAAGTSLDRLVTDIKEKLKLSKKVWSALPYTICKDERVTAGTSNEEECWNGHSKARYLPEIMNDGLTNQINNPEVEVDITRPDTFIRQQIMALRVMTNKLKNAYNGNDVNFQDTSDESSGSGSGSGCMDDVCPTEFEFVTTEAPAVDPDRREEESSASKFSSSLISWSLVCMVLALQRLYR</sequence>
<organism>
    <name type="scientific">Mus musculus</name>
    <name type="common">Mouse</name>
    <dbReference type="NCBI Taxonomy" id="10090"/>
    <lineage>
        <taxon>Eukaryota</taxon>
        <taxon>Metazoa</taxon>
        <taxon>Chordata</taxon>
        <taxon>Craniata</taxon>
        <taxon>Vertebrata</taxon>
        <taxon>Euteleostomi</taxon>
        <taxon>Mammalia</taxon>
        <taxon>Eutheria</taxon>
        <taxon>Euarchontoglires</taxon>
        <taxon>Glires</taxon>
        <taxon>Rodentia</taxon>
        <taxon>Myomorpha</taxon>
        <taxon>Muroidea</taxon>
        <taxon>Muridae</taxon>
        <taxon>Murinae</taxon>
        <taxon>Mus</taxon>
        <taxon>Mus</taxon>
    </lineage>
</organism>
<comment type="function">
    <text evidence="1">Cell surface proteoglycan that bears heparan sulfate. Putative cell surface coreceptor for growth factors, extracellular matrix proteins, proteases and anti-proteases. Enhances migration and invasion of cancer cells through WNT5A signaling (By similarity).</text>
</comment>
<comment type="subcellular location">
    <subcellularLocation>
        <location evidence="1">Cell membrane</location>
        <topology evidence="1">Lipid-anchor</topology>
        <topology evidence="1">GPI-anchor</topology>
        <orientation evidence="1">Extracellular side</orientation>
    </subcellularLocation>
</comment>
<comment type="subcellular location">
    <molecule>Secreted glypican-6</molecule>
    <subcellularLocation>
        <location evidence="1">Secreted</location>
        <location evidence="1">Extracellular space</location>
    </subcellularLocation>
</comment>
<comment type="tissue specificity">
    <text evidence="5">In the cartilage growth-plate, gradient of expression with highest levels from the proliferative and pre-hypertrophic zones to lowest, if any, in the hypertrophic zones (at protein level).</text>
</comment>
<comment type="developmental stage">
    <text evidence="4">Detected from 7 to 17 dpc. Overall expression clearly diminishes after 13 dpc. Mostly expressed in mesoderm-derived tissues, but also present in some neurectoderm-derived sites. High expression limited to mesenchymal tissues. In 11.5 and 13.5 dpc lungs, mostly restricted to the peribronchial mesenchymal cells. In the aorta and other major blood vessels, found in the subendothelial smooth muscle cell layers. Also expressed in the outflow tract of the heart ventricle, but not in other parts of the heart. At 13.5 dpc, in the developing kidney, detected in the metanephric cap mesenchyme of the cortical region, in the condensing mesenchyme surrounding the ureteric branches. Not detected in the adrenal glands. At 11.5 and 13.5 dpc, expressed weakly in the liver septae, but not in the parenchyme. Very strong expression in both the stomach and intestine, in the submucosal layers, in the condensing splanchnic mesenchyme. At 13.5 dpc, expressed in the mesenchymal cells of pancreas, gonad, mesonephric tissue and genital eminence. At 13.5 dpc, expressed in the thymus. At 11.5 dpc, strong expression in the mesenchyme of the mandibular process, with highest expression in the mesenchymal cell layer just below the oral epithelium. Not detected in the overlying epithelium. At 13.5 dpc, highly expressed in the dental mesenchyme surrounding the epithelial bud and near the top of the lip furrow, as well as in the tongue. At 13.5 dpc, expressed in the cartilage primordia of the ear and snout. Highly expressed in intervertebral disks, but not detected in the notochord and vertebrae, both at 11.5 and 13.5 dpc. Highly expressed in mesenchymal condensations of both the forelimb and hindlimb. Overall low expression in the nervous system. At 11.5 dpc, low expression in the neuroepithelium of the hindbrain, the telencephalic vesicle and neuro-epithelial cells lining the mesencephalic vesicle. At 13.5 dpc, detected in the roof of the neopallial cortex, which gives rise to the future cerebral cortex. Weak expression also observed in the medulla oblongata, the choroid plexus, and the ventral mantle layer of the spinal cord. Stronger expression in the ganglia of the glossopharyngeal nerve. At 11.5 and 13.5 dpc, expressed in the mesenchyme surrounding the olfactory epithelium, but not in the epithelium itself. Similarly expressed in the mesenchymal tissues lining the dorsal root ganglia (perineurium), but not in the ganglia. Expression also observed in a few epithelial cells (ectodermal origin), including, at 11.5 dpc, the ventromedial wall of the otic vesicle and, at 13.5 dpc, the cochlea of the inner ear. In the eye, expressed not only in the neural retina but also the cells that compose the wall of the lens vesicle.</text>
</comment>
<comment type="similarity">
    <text evidence="6">Belongs to the glypican family.</text>
</comment>
<keyword id="KW-1003">Cell membrane</keyword>
<keyword id="KW-0325">Glycoprotein</keyword>
<keyword id="KW-0336">GPI-anchor</keyword>
<keyword id="KW-0357">Heparan sulfate</keyword>
<keyword id="KW-0449">Lipoprotein</keyword>
<keyword id="KW-0472">Membrane</keyword>
<keyword id="KW-0654">Proteoglycan</keyword>
<keyword id="KW-1185">Reference proteome</keyword>
<keyword id="KW-0964">Secreted</keyword>
<keyword id="KW-0732">Signal</keyword>
<gene>
    <name type="primary">Gpc6</name>
</gene>